<keyword id="KW-0963">Cytoplasm</keyword>
<keyword id="KW-0342">GTP-binding</keyword>
<keyword id="KW-0547">Nucleotide-binding</keyword>
<evidence type="ECO:0000250" key="1"/>
<evidence type="ECO:0000255" key="2"/>
<evidence type="ECO:0000255" key="3">
    <source>
        <dbReference type="PROSITE-ProRule" id="PRU00720"/>
    </source>
</evidence>
<evidence type="ECO:0000255" key="4">
    <source>
        <dbReference type="PROSITE-ProRule" id="PRU01055"/>
    </source>
</evidence>
<accession>Q6TKS7</accession>
<protein>
    <recommendedName>
        <fullName>Interferon-induced GTP-binding protein Mx</fullName>
    </recommendedName>
    <alternativeName>
        <fullName>Interferon-inducible Mx protein</fullName>
    </alternativeName>
</protein>
<name>MX_CTEID</name>
<dbReference type="EMBL" id="AY395698">
    <property type="protein sequence ID" value="AAQ95584.1"/>
    <property type="molecule type" value="mRNA"/>
</dbReference>
<dbReference type="SMR" id="Q6TKS7"/>
<dbReference type="GO" id="GO:0005737">
    <property type="term" value="C:cytoplasm"/>
    <property type="evidence" value="ECO:0007669"/>
    <property type="project" value="UniProtKB-SubCell"/>
</dbReference>
<dbReference type="GO" id="GO:0005874">
    <property type="term" value="C:microtubule"/>
    <property type="evidence" value="ECO:0007669"/>
    <property type="project" value="TreeGrafter"/>
</dbReference>
<dbReference type="GO" id="GO:0005634">
    <property type="term" value="C:nucleus"/>
    <property type="evidence" value="ECO:0007669"/>
    <property type="project" value="TreeGrafter"/>
</dbReference>
<dbReference type="GO" id="GO:0005886">
    <property type="term" value="C:plasma membrane"/>
    <property type="evidence" value="ECO:0007669"/>
    <property type="project" value="TreeGrafter"/>
</dbReference>
<dbReference type="GO" id="GO:0098793">
    <property type="term" value="C:presynapse"/>
    <property type="evidence" value="ECO:0007669"/>
    <property type="project" value="GOC"/>
</dbReference>
<dbReference type="GO" id="GO:0005525">
    <property type="term" value="F:GTP binding"/>
    <property type="evidence" value="ECO:0007669"/>
    <property type="project" value="UniProtKB-KW"/>
</dbReference>
<dbReference type="GO" id="GO:0003924">
    <property type="term" value="F:GTPase activity"/>
    <property type="evidence" value="ECO:0007669"/>
    <property type="project" value="InterPro"/>
</dbReference>
<dbReference type="GO" id="GO:0008017">
    <property type="term" value="F:microtubule binding"/>
    <property type="evidence" value="ECO:0007669"/>
    <property type="project" value="TreeGrafter"/>
</dbReference>
<dbReference type="GO" id="GO:0051607">
    <property type="term" value="P:defense response to virus"/>
    <property type="evidence" value="ECO:0007669"/>
    <property type="project" value="TreeGrafter"/>
</dbReference>
<dbReference type="GO" id="GO:0031623">
    <property type="term" value="P:receptor internalization"/>
    <property type="evidence" value="ECO:0007669"/>
    <property type="project" value="TreeGrafter"/>
</dbReference>
<dbReference type="GO" id="GO:0016185">
    <property type="term" value="P:synaptic vesicle budding from presynaptic endocytic zone membrane"/>
    <property type="evidence" value="ECO:0007669"/>
    <property type="project" value="TreeGrafter"/>
</dbReference>
<dbReference type="CDD" id="cd08771">
    <property type="entry name" value="DLP_1"/>
    <property type="match status" value="1"/>
</dbReference>
<dbReference type="FunFam" id="1.20.120.1240:FF:000007">
    <property type="entry name" value="Interferon-induced GTP-binding protein Mx1"/>
    <property type="match status" value="1"/>
</dbReference>
<dbReference type="FunFam" id="3.40.50.300:FF:000621">
    <property type="entry name" value="Interferon-induced GTP-binding protein Mx1"/>
    <property type="match status" value="1"/>
</dbReference>
<dbReference type="Gene3D" id="1.20.120.1240">
    <property type="entry name" value="Dynamin, middle domain"/>
    <property type="match status" value="1"/>
</dbReference>
<dbReference type="Gene3D" id="3.40.50.300">
    <property type="entry name" value="P-loop containing nucleotide triphosphate hydrolases"/>
    <property type="match status" value="1"/>
</dbReference>
<dbReference type="InterPro" id="IPR022812">
    <property type="entry name" value="Dynamin"/>
</dbReference>
<dbReference type="InterPro" id="IPR001401">
    <property type="entry name" value="Dynamin_GTPase"/>
</dbReference>
<dbReference type="InterPro" id="IPR019762">
    <property type="entry name" value="Dynamin_GTPase_CS"/>
</dbReference>
<dbReference type="InterPro" id="IPR045063">
    <property type="entry name" value="Dynamin_N"/>
</dbReference>
<dbReference type="InterPro" id="IPR000375">
    <property type="entry name" value="Dynamin_stalk"/>
</dbReference>
<dbReference type="InterPro" id="IPR030381">
    <property type="entry name" value="G_DYNAMIN_dom"/>
</dbReference>
<dbReference type="InterPro" id="IPR003130">
    <property type="entry name" value="GED"/>
</dbReference>
<dbReference type="InterPro" id="IPR020850">
    <property type="entry name" value="GED_dom"/>
</dbReference>
<dbReference type="InterPro" id="IPR027417">
    <property type="entry name" value="P-loop_NTPase"/>
</dbReference>
<dbReference type="PANTHER" id="PTHR11566">
    <property type="entry name" value="DYNAMIN"/>
    <property type="match status" value="1"/>
</dbReference>
<dbReference type="PANTHER" id="PTHR11566:SF199">
    <property type="entry name" value="INTERFERON-INDUCED GTP-BINDING PROTEIN MXC-RELATED"/>
    <property type="match status" value="1"/>
</dbReference>
<dbReference type="Pfam" id="PF01031">
    <property type="entry name" value="Dynamin_M"/>
    <property type="match status" value="1"/>
</dbReference>
<dbReference type="Pfam" id="PF00350">
    <property type="entry name" value="Dynamin_N"/>
    <property type="match status" value="1"/>
</dbReference>
<dbReference type="Pfam" id="PF02212">
    <property type="entry name" value="GED"/>
    <property type="match status" value="1"/>
</dbReference>
<dbReference type="PRINTS" id="PR00195">
    <property type="entry name" value="DYNAMIN"/>
</dbReference>
<dbReference type="SMART" id="SM00053">
    <property type="entry name" value="DYNc"/>
    <property type="match status" value="1"/>
</dbReference>
<dbReference type="SMART" id="SM00302">
    <property type="entry name" value="GED"/>
    <property type="match status" value="1"/>
</dbReference>
<dbReference type="SUPFAM" id="SSF52540">
    <property type="entry name" value="P-loop containing nucleoside triphosphate hydrolases"/>
    <property type="match status" value="1"/>
</dbReference>
<dbReference type="PROSITE" id="PS00410">
    <property type="entry name" value="G_DYNAMIN_1"/>
    <property type="match status" value="1"/>
</dbReference>
<dbReference type="PROSITE" id="PS51718">
    <property type="entry name" value="G_DYNAMIN_2"/>
    <property type="match status" value="1"/>
</dbReference>
<dbReference type="PROSITE" id="PS51388">
    <property type="entry name" value="GED"/>
    <property type="match status" value="1"/>
</dbReference>
<feature type="chain" id="PRO_0000292866" description="Interferon-induced GTP-binding protein Mx">
    <location>
        <begin position="1"/>
        <end position="627"/>
    </location>
</feature>
<feature type="domain" description="Dynamin-type G" evidence="4">
    <location>
        <begin position="40"/>
        <end position="316"/>
    </location>
</feature>
<feature type="domain" description="GED" evidence="3">
    <location>
        <begin position="538"/>
        <end position="627"/>
    </location>
</feature>
<feature type="region of interest" description="G1 motif" evidence="4">
    <location>
        <begin position="50"/>
        <end position="57"/>
    </location>
</feature>
<feature type="region of interest" description="G2 motif" evidence="4">
    <location>
        <begin position="75"/>
        <end position="77"/>
    </location>
</feature>
<feature type="region of interest" description="G3 motif" evidence="4">
    <location>
        <begin position="154"/>
        <end position="157"/>
    </location>
</feature>
<feature type="region of interest" description="G4 motif" evidence="4">
    <location>
        <begin position="223"/>
        <end position="226"/>
    </location>
</feature>
<feature type="region of interest" description="G5 motif" evidence="4">
    <location>
        <begin position="255"/>
        <end position="258"/>
    </location>
</feature>
<feature type="binding site" evidence="2">
    <location>
        <begin position="50"/>
        <end position="57"/>
    </location>
    <ligand>
        <name>GTP</name>
        <dbReference type="ChEBI" id="CHEBI:37565"/>
    </ligand>
</feature>
<feature type="binding site" evidence="2">
    <location>
        <begin position="154"/>
        <end position="158"/>
    </location>
    <ligand>
        <name>GTP</name>
        <dbReference type="ChEBI" id="CHEBI:37565"/>
    </ligand>
</feature>
<feature type="binding site" evidence="2">
    <location>
        <begin position="223"/>
        <end position="226"/>
    </location>
    <ligand>
        <name>GTP</name>
        <dbReference type="ChEBI" id="CHEBI:37565"/>
    </ligand>
</feature>
<gene>
    <name type="primary">mx</name>
</gene>
<proteinExistence type="evidence at transcript level"/>
<organism>
    <name type="scientific">Ctenopharyngodon idella</name>
    <name type="common">Grass carp</name>
    <name type="synonym">Leuciscus idella</name>
    <dbReference type="NCBI Taxonomy" id="7959"/>
    <lineage>
        <taxon>Eukaryota</taxon>
        <taxon>Metazoa</taxon>
        <taxon>Chordata</taxon>
        <taxon>Craniata</taxon>
        <taxon>Vertebrata</taxon>
        <taxon>Euteleostomi</taxon>
        <taxon>Actinopterygii</taxon>
        <taxon>Neopterygii</taxon>
        <taxon>Teleostei</taxon>
        <taxon>Ostariophysi</taxon>
        <taxon>Cypriniformes</taxon>
        <taxon>Xenocyprididae</taxon>
        <taxon>Xenocypridinae</taxon>
        <taxon>Ctenopharyngodon</taxon>
    </lineage>
</organism>
<reference key="1">
    <citation type="submission" date="2003-09" db="EMBL/GenBank/DDBJ databases">
        <title>The gene cloning and analysis of Mx of grass carp.</title>
        <authorList>
            <person name="Luo J."/>
            <person name="Wu H."/>
            <person name="Bai J."/>
            <person name="Lao H."/>
            <person name="Ye X."/>
            <person name="Jian Q."/>
        </authorList>
    </citation>
    <scope>NUCLEOTIDE SEQUENCE [MRNA]</scope>
</reference>
<sequence length="627" mass="71252">MSPSTSSKGKSSGLNQHYEEKVRPCIDLVDSLRSLGVEKDLNLPAIAVIGDQSSGKSSVLEALSGVALPRGTGIVTRCPLVLKLKKISKDNNWHQWHGLMSYRDQTKKLKDPAEIENAVLKAQTVLAGTGEGISHEMITLEIQSSDVPDLTLIDLPGIARVATGNQPKDIEKQIKDLIEKYIKRQETISLVVVPANIDIATTEALQMASKVDSTGQRTLGILTKPDLVDKGMEETVVRTVNNQVIQLKKGYMIVKCRGQQDINEKLDLVEALEKERHFFDEHAHFRSLLEEGKATIPLLAERLTKELVEHITKTLPQLQKQLEMKLEKTTEDLRALGAGVPTDEHEKNNFLIAKIRQFIDALEGIKKAEEDLRSSDMRVFTKIRKEFDRWKTVLDAKTIKTEETLRDEVEEYVGTRRGRELPGFVNYRTFENIVKKHIEELEEPALKLLKDVTDIVHSCVNRIVSSHFKAFSHLLRATKDPIEDFLDEQFQKAEEKIHSQFKMERIVYSQDHLYSNKLDTVKQNLKVLGQRPFISAEVREMAQHLTAYFMITSDHLANQVPLIVQYHILDQYISQLQNAMLAMIGRNNPGMLLQEDSDVARKRRELKERLERLKSAGKVLSKFVHSV</sequence>
<comment type="subcellular location">
    <subcellularLocation>
        <location evidence="1">Cytoplasm</location>
    </subcellularLocation>
</comment>
<comment type="induction">
    <text>By interferons.</text>
</comment>
<comment type="similarity">
    <text evidence="4">Belongs to the TRAFAC class dynamin-like GTPase superfamily. Dynamin/Fzo/YdjA family.</text>
</comment>